<sequence length="444" mass="50930">MDPLNLSWYDDDLERQNWSRPFNGSEGKPDRPHYNYYAMLLTLLIFIIVFGNVLVCMAVSREKALQTTTNYLIVSLAVADLLVATLVMPWVVYLEVVGEWKFSRIHCDIFVTLDVMMCTASILNLCAISIDRYTAVAMPMLYNTRYSSKRRVTVMIAIVWVLSFTISCPLLFGLNNTDQNECIIANPAFVVYSSIVSFYVPFIVTLLVYIKIYIVLRKRRKRVNTKRSSRAFRANLKTPLKGNCTHPEDMKLCTVIMKSNGSFPVNRRRMDAARRAQELEMEMLSSTSPPERTRYSPIPPSHHQLTLPDPSHHGLHSNPDSPAKPEKNGHAKIVNPRIAKFFEIQTMPNGKTRTSLKTMSRRKLSQQKEKKATQMLAIVLGVFIICWLPFFITHILNIHCDCNIPPVLYSAFTWLGYVNSAVNPIIYTTFNIEFRKAFMKILHC</sequence>
<organism>
    <name type="scientific">Mus musculus</name>
    <name type="common">Mouse</name>
    <dbReference type="NCBI Taxonomy" id="10090"/>
    <lineage>
        <taxon>Eukaryota</taxon>
        <taxon>Metazoa</taxon>
        <taxon>Chordata</taxon>
        <taxon>Craniata</taxon>
        <taxon>Vertebrata</taxon>
        <taxon>Euteleostomi</taxon>
        <taxon>Mammalia</taxon>
        <taxon>Eutheria</taxon>
        <taxon>Euarchontoglires</taxon>
        <taxon>Glires</taxon>
        <taxon>Rodentia</taxon>
        <taxon>Myomorpha</taxon>
        <taxon>Muroidea</taxon>
        <taxon>Muridae</taxon>
        <taxon>Murinae</taxon>
        <taxon>Mus</taxon>
        <taxon>Mus</taxon>
    </lineage>
</organism>
<comment type="function">
    <text evidence="2 10">Dopamine receptor whose activity is mediated by G proteins which inhibit adenylyl cyclase (By similarity). Positively regulates postnatal regression of retinal hyaloid vessels via suppression of VEGFR2/KDR activity, downstream of OPN5 (PubMed:30936473).</text>
</comment>
<comment type="subunit">
    <text evidence="2 3 9">Forms homo- and heterooligomers with DRD4 (By similarity). The interaction with DRD4 may modulate agonist-induced downstream signaling (By similarity). Interacts with CADPS and CADPS2 (By similarity). Interacts with GPRASP1, PPP1R9B and CLIC6 (By similarity). Interacts with ARRB2 (By similarity). Interacts with HTR2A (By similarity). Interacts with DRD1 (PubMed:25865831).</text>
</comment>
<comment type="subunit">
    <molecule>Isoform 1</molecule>
    <text evidence="8">Interacts with KCNA2.</text>
</comment>
<comment type="subunit">
    <molecule>Isoform 2</molecule>
    <text evidence="8">Interacts with KCNA2.</text>
</comment>
<comment type="subcellular location">
    <subcellularLocation>
        <location evidence="2">Cell membrane</location>
        <topology evidence="4">Multi-pass membrane protein</topology>
    </subcellularLocation>
    <subcellularLocation>
        <location evidence="2">Golgi apparatus membrane</location>
        <topology evidence="4">Multi-pass membrane protein</topology>
    </subcellularLocation>
</comment>
<comment type="alternative products">
    <event type="alternative splicing"/>
    <isoform>
        <id>P61168-1</id>
        <id>P13953-1</id>
        <name>1</name>
        <name>Long</name>
        <sequence type="displayed"/>
    </isoform>
    <isoform>
        <id>P61168-2</id>
        <id>P13953-2</id>
        <name>2</name>
        <name>Short</name>
        <sequence type="described" ref="VSP_010241"/>
    </isoform>
</comment>
<comment type="tissue specificity">
    <text evidence="10">Expressed in retinal hyaloid vessels at postnatal day 6.</text>
</comment>
<comment type="tissue specificity">
    <molecule>Isoform 1</molecule>
    <text evidence="7">Expressed in the pituitary gland, stratum, brain stem and cortex.</text>
</comment>
<comment type="tissue specificity">
    <molecule>Isoform 2</molecule>
    <text evidence="7">Expressed in the brain stem.</text>
</comment>
<comment type="PTM">
    <text evidence="2">Palmitoylated. Palmitoylation which is required for proper localization to the plasma membrane and stability of the receptor could be carried on by ZDHHC4, ZDHHC3 and ZDHHC8.</text>
</comment>
<comment type="disruption phenotype">
    <text evidence="10">Conditional knockouts in vascular endothelial cells show an increase in activated Vegfr2/Kdr in the retinal hyaloid at P6, and hyaloid vessels continue to persist at P8.</text>
</comment>
<comment type="similarity">
    <text evidence="5">Belongs to the G-protein coupled receptor 1 family.</text>
</comment>
<proteinExistence type="evidence at protein level"/>
<accession>P61168</accession>
<accession>P13953</accession>
<accession>Q0VGH9</accession>
<dbReference type="EMBL" id="X55674">
    <property type="protein sequence ID" value="CAA39209.1"/>
    <property type="molecule type" value="mRNA"/>
</dbReference>
<dbReference type="EMBL" id="CH466522">
    <property type="protein sequence ID" value="EDL25723.1"/>
    <property type="molecule type" value="Genomic_DNA"/>
</dbReference>
<dbReference type="EMBL" id="BC105663">
    <property type="protein sequence ID" value="AAI05664.1"/>
    <property type="molecule type" value="mRNA"/>
</dbReference>
<dbReference type="EMBL" id="BC105664">
    <property type="protein sequence ID" value="AAI05665.1"/>
    <property type="molecule type" value="mRNA"/>
</dbReference>
<dbReference type="EMBL" id="BC105665">
    <property type="protein sequence ID" value="AAI05666.1"/>
    <property type="molecule type" value="mRNA"/>
</dbReference>
<dbReference type="EMBL" id="BC105666">
    <property type="protein sequence ID" value="AAI05667.1"/>
    <property type="molecule type" value="mRNA"/>
</dbReference>
<dbReference type="CCDS" id="CCDS40615.1"/>
<dbReference type="PIR" id="S13921">
    <property type="entry name" value="DYMSD2"/>
</dbReference>
<dbReference type="RefSeq" id="NP_001397122.1">
    <molecule id="P61168-2"/>
    <property type="nucleotide sequence ID" value="NM_001410193.1"/>
</dbReference>
<dbReference type="RefSeq" id="NP_034207.2">
    <molecule id="P61168-1"/>
    <property type="nucleotide sequence ID" value="NM_010077.3"/>
</dbReference>
<dbReference type="RefSeq" id="XP_006510059.1">
    <property type="nucleotide sequence ID" value="XM_006509996.3"/>
</dbReference>
<dbReference type="SMR" id="P61168"/>
<dbReference type="BioGRID" id="199306">
    <property type="interactions" value="7"/>
</dbReference>
<dbReference type="CORUM" id="P61168"/>
<dbReference type="FunCoup" id="P61168">
    <property type="interactions" value="793"/>
</dbReference>
<dbReference type="IntAct" id="P61168">
    <property type="interactions" value="7"/>
</dbReference>
<dbReference type="MINT" id="P61168"/>
<dbReference type="STRING" id="10090.ENSMUSP00000075170"/>
<dbReference type="BindingDB" id="P61168"/>
<dbReference type="ChEMBL" id="CHEMBL3427"/>
<dbReference type="DrugCentral" id="P61168"/>
<dbReference type="GuidetoPHARMACOLOGY" id="215"/>
<dbReference type="GlyCosmos" id="P61168">
    <property type="glycosylation" value="3 sites, No reported glycans"/>
</dbReference>
<dbReference type="GlyGen" id="P61168">
    <property type="glycosylation" value="3 sites"/>
</dbReference>
<dbReference type="PhosphoSitePlus" id="P61168"/>
<dbReference type="PaxDb" id="10090-ENSMUSP00000075170"/>
<dbReference type="ProteomicsDB" id="277493"/>
<dbReference type="ProteomicsDB" id="277494">
    <molecule id="P61168-2"/>
</dbReference>
<dbReference type="ABCD" id="P61168">
    <property type="antibodies" value="1 sequenced antibody"/>
</dbReference>
<dbReference type="Antibodypedia" id="2801">
    <property type="antibodies" value="358 antibodies from 41 providers"/>
</dbReference>
<dbReference type="DNASU" id="13489"/>
<dbReference type="Ensembl" id="ENSMUST00000075764.8">
    <molecule id="P61168-1"/>
    <property type="protein sequence ID" value="ENSMUSP00000075170.7"/>
    <property type="gene ID" value="ENSMUSG00000032259.9"/>
</dbReference>
<dbReference type="GeneID" id="13489"/>
<dbReference type="KEGG" id="mmu:13489"/>
<dbReference type="UCSC" id="uc009pja.1">
    <property type="organism name" value="mouse"/>
</dbReference>
<dbReference type="AGR" id="MGI:94924"/>
<dbReference type="CTD" id="1813"/>
<dbReference type="MGI" id="MGI:94924">
    <property type="gene designation" value="Drd2"/>
</dbReference>
<dbReference type="VEuPathDB" id="HostDB:ENSMUSG00000032259"/>
<dbReference type="eggNOG" id="KOG3656">
    <property type="taxonomic scope" value="Eukaryota"/>
</dbReference>
<dbReference type="GeneTree" id="ENSGT00940000155539"/>
<dbReference type="HOGENOM" id="CLU_009579_11_1_1"/>
<dbReference type="InParanoid" id="P61168"/>
<dbReference type="OMA" id="TPLKGNC"/>
<dbReference type="OrthoDB" id="10034726at2759"/>
<dbReference type="PhylomeDB" id="P61168"/>
<dbReference type="TreeFam" id="TF334382"/>
<dbReference type="Reactome" id="R-MMU-390651">
    <property type="pathway name" value="Dopamine receptors"/>
</dbReference>
<dbReference type="BioGRID-ORCS" id="13489">
    <property type="hits" value="1 hit in 78 CRISPR screens"/>
</dbReference>
<dbReference type="PRO" id="PR:P61168"/>
<dbReference type="Proteomes" id="UP000000589">
    <property type="component" value="Chromosome 9"/>
</dbReference>
<dbReference type="RNAct" id="P61168">
    <property type="molecule type" value="protein"/>
</dbReference>
<dbReference type="Bgee" id="ENSMUSG00000032259">
    <property type="expression patterns" value="Expressed in superior frontal gyrus and 78 other cell types or tissues"/>
</dbReference>
<dbReference type="GO" id="GO:0001669">
    <property type="term" value="C:acrosomal vesicle"/>
    <property type="evidence" value="ECO:0007669"/>
    <property type="project" value="Ensembl"/>
</dbReference>
<dbReference type="GO" id="GO:0030424">
    <property type="term" value="C:axon"/>
    <property type="evidence" value="ECO:0000314"/>
    <property type="project" value="MGI"/>
</dbReference>
<dbReference type="GO" id="GO:0043679">
    <property type="term" value="C:axon terminus"/>
    <property type="evidence" value="ECO:0007669"/>
    <property type="project" value="Ensembl"/>
</dbReference>
<dbReference type="GO" id="GO:0060170">
    <property type="term" value="C:ciliary membrane"/>
    <property type="evidence" value="ECO:0007669"/>
    <property type="project" value="Ensembl"/>
</dbReference>
<dbReference type="GO" id="GO:0005929">
    <property type="term" value="C:cilium"/>
    <property type="evidence" value="ECO:0000314"/>
    <property type="project" value="MGI"/>
</dbReference>
<dbReference type="GO" id="GO:0030425">
    <property type="term" value="C:dendrite"/>
    <property type="evidence" value="ECO:0000314"/>
    <property type="project" value="MGI"/>
</dbReference>
<dbReference type="GO" id="GO:0043197">
    <property type="term" value="C:dendritic spine"/>
    <property type="evidence" value="ECO:0007669"/>
    <property type="project" value="Ensembl"/>
</dbReference>
<dbReference type="GO" id="GO:0098691">
    <property type="term" value="C:dopaminergic synapse"/>
    <property type="evidence" value="ECO:0000314"/>
    <property type="project" value="SynGO"/>
</dbReference>
<dbReference type="GO" id="GO:0030139">
    <property type="term" value="C:endocytic vesicle"/>
    <property type="evidence" value="ECO:0007669"/>
    <property type="project" value="Ensembl"/>
</dbReference>
<dbReference type="GO" id="GO:0097648">
    <property type="term" value="C:G protein-coupled receptor complex"/>
    <property type="evidence" value="ECO:0007669"/>
    <property type="project" value="Ensembl"/>
</dbReference>
<dbReference type="GO" id="GO:0098982">
    <property type="term" value="C:GABA-ergic synapse"/>
    <property type="evidence" value="ECO:0000314"/>
    <property type="project" value="SynGO"/>
</dbReference>
<dbReference type="GO" id="GO:0098978">
    <property type="term" value="C:glutamatergic synapse"/>
    <property type="evidence" value="ECO:0000314"/>
    <property type="project" value="SynGO"/>
</dbReference>
<dbReference type="GO" id="GO:0000139">
    <property type="term" value="C:Golgi membrane"/>
    <property type="evidence" value="ECO:0007669"/>
    <property type="project" value="UniProtKB-SubCell"/>
</dbReference>
<dbReference type="GO" id="GO:0016328">
    <property type="term" value="C:lateral plasma membrane"/>
    <property type="evidence" value="ECO:0007669"/>
    <property type="project" value="Ensembl"/>
</dbReference>
<dbReference type="GO" id="GO:0016020">
    <property type="term" value="C:membrane"/>
    <property type="evidence" value="ECO:0000314"/>
    <property type="project" value="MGI"/>
</dbReference>
<dbReference type="GO" id="GO:0097730">
    <property type="term" value="C:non-motile cilium"/>
    <property type="evidence" value="ECO:0007669"/>
    <property type="project" value="Ensembl"/>
</dbReference>
<dbReference type="GO" id="GO:0043204">
    <property type="term" value="C:perikaryon"/>
    <property type="evidence" value="ECO:0007669"/>
    <property type="project" value="Ensembl"/>
</dbReference>
<dbReference type="GO" id="GO:0045211">
    <property type="term" value="C:postsynaptic membrane"/>
    <property type="evidence" value="ECO:0000314"/>
    <property type="project" value="SynGO"/>
</dbReference>
<dbReference type="GO" id="GO:0042734">
    <property type="term" value="C:presynaptic membrane"/>
    <property type="evidence" value="ECO:0000314"/>
    <property type="project" value="SynGO"/>
</dbReference>
<dbReference type="GO" id="GO:0036126">
    <property type="term" value="C:sperm flagellum"/>
    <property type="evidence" value="ECO:0007669"/>
    <property type="project" value="Ensembl"/>
</dbReference>
<dbReference type="GO" id="GO:0045202">
    <property type="term" value="C:synapse"/>
    <property type="evidence" value="ECO:0007669"/>
    <property type="project" value="GOC"/>
</dbReference>
<dbReference type="GO" id="GO:0030672">
    <property type="term" value="C:synaptic vesicle membrane"/>
    <property type="evidence" value="ECO:0007669"/>
    <property type="project" value="Ensembl"/>
</dbReference>
<dbReference type="GO" id="GO:0035240">
    <property type="term" value="F:dopamine binding"/>
    <property type="evidence" value="ECO:0000314"/>
    <property type="project" value="MGI"/>
</dbReference>
<dbReference type="GO" id="GO:0004952">
    <property type="term" value="F:dopamine neurotransmitter receptor activity"/>
    <property type="evidence" value="ECO:0000314"/>
    <property type="project" value="MGI"/>
</dbReference>
<dbReference type="GO" id="GO:0001591">
    <property type="term" value="F:dopamine neurotransmitter receptor activity, coupled via Gi/Go"/>
    <property type="evidence" value="ECO:0000314"/>
    <property type="project" value="MGI"/>
</dbReference>
<dbReference type="GO" id="GO:0004930">
    <property type="term" value="F:G protein-coupled receptor activity"/>
    <property type="evidence" value="ECO:0000314"/>
    <property type="project" value="MGI"/>
</dbReference>
<dbReference type="GO" id="GO:0001965">
    <property type="term" value="F:G-protein alpha-subunit binding"/>
    <property type="evidence" value="ECO:0007669"/>
    <property type="project" value="Ensembl"/>
</dbReference>
<dbReference type="GO" id="GO:1901363">
    <property type="term" value="F:heterocyclic compound binding"/>
    <property type="evidence" value="ECO:0007669"/>
    <property type="project" value="Ensembl"/>
</dbReference>
<dbReference type="GO" id="GO:0032795">
    <property type="term" value="F:heterotrimeric G-protein binding"/>
    <property type="evidence" value="ECO:0007669"/>
    <property type="project" value="Ensembl"/>
</dbReference>
<dbReference type="GO" id="GO:0042802">
    <property type="term" value="F:identical protein binding"/>
    <property type="evidence" value="ECO:0007669"/>
    <property type="project" value="Ensembl"/>
</dbReference>
<dbReference type="GO" id="GO:0035255">
    <property type="term" value="F:ionotropic glutamate receptor binding"/>
    <property type="evidence" value="ECO:0007669"/>
    <property type="project" value="Ensembl"/>
</dbReference>
<dbReference type="GO" id="GO:0046717">
    <property type="term" value="P:acid secretion"/>
    <property type="evidence" value="ECO:0007669"/>
    <property type="project" value="Ensembl"/>
</dbReference>
<dbReference type="GO" id="GO:0021984">
    <property type="term" value="P:adenohypophysis development"/>
    <property type="evidence" value="ECO:0000315"/>
    <property type="project" value="MGI"/>
</dbReference>
<dbReference type="GO" id="GO:0007195">
    <property type="term" value="P:adenylate cyclase-inhibiting dopamine receptor signaling pathway"/>
    <property type="evidence" value="ECO:0000314"/>
    <property type="project" value="MGI"/>
</dbReference>
<dbReference type="GO" id="GO:0030534">
    <property type="term" value="P:adult behavior"/>
    <property type="evidence" value="ECO:0000315"/>
    <property type="project" value="MGI"/>
</dbReference>
<dbReference type="GO" id="GO:0007628">
    <property type="term" value="P:adult walking behavior"/>
    <property type="evidence" value="ECO:0000315"/>
    <property type="project" value="MGI"/>
</dbReference>
<dbReference type="GO" id="GO:0050482">
    <property type="term" value="P:arachidonate secretion"/>
    <property type="evidence" value="ECO:0007669"/>
    <property type="project" value="Ensembl"/>
</dbReference>
<dbReference type="GO" id="GO:0008306">
    <property type="term" value="P:associative learning"/>
    <property type="evidence" value="ECO:0000315"/>
    <property type="project" value="MGI"/>
</dbReference>
<dbReference type="GO" id="GO:0031223">
    <property type="term" value="P:auditory behavior"/>
    <property type="evidence" value="ECO:0007669"/>
    <property type="project" value="Ensembl"/>
</dbReference>
<dbReference type="GO" id="GO:0006914">
    <property type="term" value="P:autophagy"/>
    <property type="evidence" value="ECO:0007669"/>
    <property type="project" value="Ensembl"/>
</dbReference>
<dbReference type="GO" id="GO:0007409">
    <property type="term" value="P:axonogenesis"/>
    <property type="evidence" value="ECO:0000315"/>
    <property type="project" value="MGI"/>
</dbReference>
<dbReference type="GO" id="GO:0048148">
    <property type="term" value="P:behavioral response to cocaine"/>
    <property type="evidence" value="ECO:0000315"/>
    <property type="project" value="MGI"/>
</dbReference>
<dbReference type="GO" id="GO:0048149">
    <property type="term" value="P:behavioral response to ethanol"/>
    <property type="evidence" value="ECO:0000315"/>
    <property type="project" value="MGI"/>
</dbReference>
<dbReference type="GO" id="GO:0048755">
    <property type="term" value="P:branching morphogenesis of a nerve"/>
    <property type="evidence" value="ECO:0000315"/>
    <property type="project" value="MGI"/>
</dbReference>
<dbReference type="GO" id="GO:0016477">
    <property type="term" value="P:cell migration"/>
    <property type="evidence" value="ECO:0000315"/>
    <property type="project" value="MGI"/>
</dbReference>
<dbReference type="GO" id="GO:0008283">
    <property type="term" value="P:cell population proliferation"/>
    <property type="evidence" value="ECO:0000315"/>
    <property type="project" value="MGI"/>
</dbReference>
<dbReference type="GO" id="GO:0071361">
    <property type="term" value="P:cellular response to ethanol"/>
    <property type="evidence" value="ECO:0007669"/>
    <property type="project" value="Ensembl"/>
</dbReference>
<dbReference type="GO" id="GO:0071300">
    <property type="term" value="P:cellular response to retinoic acid"/>
    <property type="evidence" value="ECO:0007669"/>
    <property type="project" value="Ensembl"/>
</dbReference>
<dbReference type="GO" id="GO:0021853">
    <property type="term" value="P:cerebral cortex GABAergic interneuron migration"/>
    <property type="evidence" value="ECO:0000315"/>
    <property type="project" value="MGI"/>
</dbReference>
<dbReference type="GO" id="GO:0032922">
    <property type="term" value="P:circadian regulation of gene expression"/>
    <property type="evidence" value="ECO:0000315"/>
    <property type="project" value="MGI"/>
</dbReference>
<dbReference type="GO" id="GO:0042417">
    <property type="term" value="P:dopamine metabolic process"/>
    <property type="evidence" value="ECO:0000315"/>
    <property type="project" value="MGI"/>
</dbReference>
<dbReference type="GO" id="GO:0051583">
    <property type="term" value="P:dopamine uptake involved in synaptic transmission"/>
    <property type="evidence" value="ECO:0000315"/>
    <property type="project" value="MGI"/>
</dbReference>
<dbReference type="GO" id="GO:0042756">
    <property type="term" value="P:drinking behavior"/>
    <property type="evidence" value="ECO:0007669"/>
    <property type="project" value="Ensembl"/>
</dbReference>
<dbReference type="GO" id="GO:0050673">
    <property type="term" value="P:epithelial cell proliferation"/>
    <property type="evidence" value="ECO:0000315"/>
    <property type="project" value="MGI"/>
</dbReference>
<dbReference type="GO" id="GO:0007631">
    <property type="term" value="P:feeding behavior"/>
    <property type="evidence" value="ECO:0000316"/>
    <property type="project" value="MGI"/>
</dbReference>
<dbReference type="GO" id="GO:0007212">
    <property type="term" value="P:G protein-coupled dopamine receptor signaling pathway"/>
    <property type="evidence" value="ECO:0000316"/>
    <property type="project" value="MGI"/>
</dbReference>
<dbReference type="GO" id="GO:0002031">
    <property type="term" value="P:G protein-coupled receptor internalization"/>
    <property type="evidence" value="ECO:0007669"/>
    <property type="project" value="Ensembl"/>
</dbReference>
<dbReference type="GO" id="GO:0007186">
    <property type="term" value="P:G protein-coupled receptor signaling pathway"/>
    <property type="evidence" value="ECO:0000314"/>
    <property type="project" value="MGI"/>
</dbReference>
<dbReference type="GO" id="GO:0007625">
    <property type="term" value="P:grooming behavior"/>
    <property type="evidence" value="ECO:0000315"/>
    <property type="project" value="MGI"/>
</dbReference>
<dbReference type="GO" id="GO:1990384">
    <property type="term" value="P:hyaloid vascular plexus regression"/>
    <property type="evidence" value="ECO:0000315"/>
    <property type="project" value="UniProtKB"/>
</dbReference>
<dbReference type="GO" id="GO:0007626">
    <property type="term" value="P:locomotory behavior"/>
    <property type="evidence" value="ECO:0000315"/>
    <property type="project" value="MGI"/>
</dbReference>
<dbReference type="GO" id="GO:0007616">
    <property type="term" value="P:long-term memory"/>
    <property type="evidence" value="ECO:0007669"/>
    <property type="project" value="Ensembl"/>
</dbReference>
<dbReference type="GO" id="GO:0050804">
    <property type="term" value="P:modulation of chemical synaptic transmission"/>
    <property type="evidence" value="ECO:0000315"/>
    <property type="project" value="MGI"/>
</dbReference>
<dbReference type="GO" id="GO:0045776">
    <property type="term" value="P:negative regulation of blood pressure"/>
    <property type="evidence" value="ECO:0000315"/>
    <property type="project" value="MGI"/>
</dbReference>
<dbReference type="GO" id="GO:0008285">
    <property type="term" value="P:negative regulation of cell population proliferation"/>
    <property type="evidence" value="ECO:0000315"/>
    <property type="project" value="MGI"/>
</dbReference>
<dbReference type="GO" id="GO:1900038">
    <property type="term" value="P:negative regulation of cellular response to hypoxia"/>
    <property type="evidence" value="ECO:0007669"/>
    <property type="project" value="Ensembl"/>
</dbReference>
<dbReference type="GO" id="GO:0042321">
    <property type="term" value="P:negative regulation of circadian sleep/wake cycle, sleep"/>
    <property type="evidence" value="ECO:0007669"/>
    <property type="project" value="Ensembl"/>
</dbReference>
<dbReference type="GO" id="GO:0051481">
    <property type="term" value="P:negative regulation of cytosolic calcium ion concentration"/>
    <property type="evidence" value="ECO:0007669"/>
    <property type="project" value="Ensembl"/>
</dbReference>
<dbReference type="GO" id="GO:0035305">
    <property type="term" value="P:negative regulation of dephosphorylation"/>
    <property type="evidence" value="ECO:0007669"/>
    <property type="project" value="Ensembl"/>
</dbReference>
<dbReference type="GO" id="GO:0060160">
    <property type="term" value="P:negative regulation of dopamine receptor signaling pathway"/>
    <property type="evidence" value="ECO:0000315"/>
    <property type="project" value="MGI"/>
</dbReference>
<dbReference type="GO" id="GO:0033602">
    <property type="term" value="P:negative regulation of dopamine secretion"/>
    <property type="evidence" value="ECO:0007669"/>
    <property type="project" value="Ensembl"/>
</dbReference>
<dbReference type="GO" id="GO:0050680">
    <property type="term" value="P:negative regulation of epithelial cell proliferation"/>
    <property type="evidence" value="ECO:0000315"/>
    <property type="project" value="MGI"/>
</dbReference>
<dbReference type="GO" id="GO:0045824">
    <property type="term" value="P:negative regulation of innate immune response"/>
    <property type="evidence" value="ECO:0000315"/>
    <property type="project" value="CACAO"/>
</dbReference>
<dbReference type="GO" id="GO:0046676">
    <property type="term" value="P:negative regulation of insulin secretion"/>
    <property type="evidence" value="ECO:0007669"/>
    <property type="project" value="Ensembl"/>
</dbReference>
<dbReference type="GO" id="GO:2001223">
    <property type="term" value="P:negative regulation of neuron migration"/>
    <property type="evidence" value="ECO:0000315"/>
    <property type="project" value="MGI"/>
</dbReference>
<dbReference type="GO" id="GO:0051898">
    <property type="term" value="P:negative regulation of phosphatidylinositol 3-kinase/protein kinase B signal transduction"/>
    <property type="evidence" value="ECO:0000315"/>
    <property type="project" value="MGI"/>
</dbReference>
<dbReference type="GO" id="GO:0051967">
    <property type="term" value="P:negative regulation of synaptic transmission, glutamatergic"/>
    <property type="evidence" value="ECO:0000315"/>
    <property type="project" value="MGI"/>
</dbReference>
<dbReference type="GO" id="GO:0001976">
    <property type="term" value="P:nervous system process involved in regulation of systemic arterial blood pressure"/>
    <property type="evidence" value="ECO:0000315"/>
    <property type="project" value="MGI"/>
</dbReference>
<dbReference type="GO" id="GO:0007405">
    <property type="term" value="P:neuroblast proliferation"/>
    <property type="evidence" value="ECO:0000314"/>
    <property type="project" value="MGI"/>
</dbReference>
<dbReference type="GO" id="GO:0001764">
    <property type="term" value="P:neuron migration"/>
    <property type="evidence" value="ECO:0000315"/>
    <property type="project" value="MGI"/>
</dbReference>
<dbReference type="GO" id="GO:0007270">
    <property type="term" value="P:neuron-neuron synaptic transmission"/>
    <property type="evidence" value="ECO:0000315"/>
    <property type="project" value="MGI"/>
</dbReference>
<dbReference type="GO" id="GO:0021769">
    <property type="term" value="P:orbitofrontal cortex development"/>
    <property type="evidence" value="ECO:0007669"/>
    <property type="project" value="Ensembl"/>
</dbReference>
<dbReference type="GO" id="GO:0030432">
    <property type="term" value="P:peristalsis"/>
    <property type="evidence" value="ECO:0000315"/>
    <property type="project" value="MGI"/>
</dbReference>
<dbReference type="GO" id="GO:0043491">
    <property type="term" value="P:phosphatidylinositol 3-kinase/protein kinase B signal transduction"/>
    <property type="evidence" value="ECO:0000315"/>
    <property type="project" value="MGI"/>
</dbReference>
<dbReference type="GO" id="GO:0060158">
    <property type="term" value="P:phospholipase C-activating dopamine receptor signaling pathway"/>
    <property type="evidence" value="ECO:0000314"/>
    <property type="project" value="MGI"/>
</dbReference>
<dbReference type="GO" id="GO:0043473">
    <property type="term" value="P:pigmentation"/>
    <property type="evidence" value="ECO:0000315"/>
    <property type="project" value="MGI"/>
</dbReference>
<dbReference type="GO" id="GO:0032467">
    <property type="term" value="P:positive regulation of cytokinesis"/>
    <property type="evidence" value="ECO:0007669"/>
    <property type="project" value="Ensembl"/>
</dbReference>
<dbReference type="GO" id="GO:0051586">
    <property type="term" value="P:positive regulation of dopamine uptake involved in synaptic transmission"/>
    <property type="evidence" value="ECO:0000315"/>
    <property type="project" value="MGI"/>
</dbReference>
<dbReference type="GO" id="GO:0070374">
    <property type="term" value="P:positive regulation of ERK1 and ERK2 cascade"/>
    <property type="evidence" value="ECO:0007669"/>
    <property type="project" value="Ensembl"/>
</dbReference>
<dbReference type="GO" id="GO:0045745">
    <property type="term" value="P:positive regulation of G protein-coupled receptor signaling pathway"/>
    <property type="evidence" value="ECO:0007669"/>
    <property type="project" value="Ensembl"/>
</dbReference>
<dbReference type="GO" id="GO:1900168">
    <property type="term" value="P:positive regulation of glial cell-derived neurotrophic factor production"/>
    <property type="evidence" value="ECO:0007669"/>
    <property type="project" value="Ensembl"/>
</dbReference>
<dbReference type="GO" id="GO:0060124">
    <property type="term" value="P:positive regulation of growth hormone secretion"/>
    <property type="evidence" value="ECO:0000315"/>
    <property type="project" value="MGI"/>
</dbReference>
<dbReference type="GO" id="GO:1900273">
    <property type="term" value="P:positive regulation of long-term synaptic potentiation"/>
    <property type="evidence" value="ECO:0007669"/>
    <property type="project" value="Ensembl"/>
</dbReference>
<dbReference type="GO" id="GO:0040018">
    <property type="term" value="P:positive regulation of multicellular organism growth"/>
    <property type="evidence" value="ECO:0000315"/>
    <property type="project" value="MGI"/>
</dbReference>
<dbReference type="GO" id="GO:0002052">
    <property type="term" value="P:positive regulation of neuroblast proliferation"/>
    <property type="evidence" value="ECO:0000314"/>
    <property type="project" value="MGI"/>
</dbReference>
<dbReference type="GO" id="GO:0002092">
    <property type="term" value="P:positive regulation of receptor internalization"/>
    <property type="evidence" value="ECO:0007669"/>
    <property type="project" value="Ensembl"/>
</dbReference>
<dbReference type="GO" id="GO:0035815">
    <property type="term" value="P:positive regulation of renal sodium excretion"/>
    <property type="evidence" value="ECO:0000315"/>
    <property type="project" value="MGI"/>
</dbReference>
<dbReference type="GO" id="GO:0045944">
    <property type="term" value="P:positive regulation of transcription by RNA polymerase II"/>
    <property type="evidence" value="ECO:0007669"/>
    <property type="project" value="Ensembl"/>
</dbReference>
<dbReference type="GO" id="GO:0035810">
    <property type="term" value="P:positive regulation of urine volume"/>
    <property type="evidence" value="ECO:0000315"/>
    <property type="project" value="MGI"/>
</dbReference>
<dbReference type="GO" id="GO:0099170">
    <property type="term" value="P:postsynaptic modulation of chemical synaptic transmission"/>
    <property type="evidence" value="ECO:0007669"/>
    <property type="project" value="Ensembl"/>
</dbReference>
<dbReference type="GO" id="GO:0060134">
    <property type="term" value="P:prepulse inhibition"/>
    <property type="evidence" value="ECO:0000315"/>
    <property type="project" value="MGI"/>
</dbReference>
<dbReference type="GO" id="GO:0099171">
    <property type="term" value="P:presynaptic modulation of chemical synaptic transmission"/>
    <property type="evidence" value="ECO:0000314"/>
    <property type="project" value="SynGO"/>
</dbReference>
<dbReference type="GO" id="GO:0008104">
    <property type="term" value="P:protein localization"/>
    <property type="evidence" value="ECO:0000315"/>
    <property type="project" value="MGI"/>
</dbReference>
<dbReference type="GO" id="GO:0014059">
    <property type="term" value="P:regulation of dopamine secretion"/>
    <property type="evidence" value="ECO:0000315"/>
    <property type="project" value="MGI"/>
</dbReference>
<dbReference type="GO" id="GO:0051584">
    <property type="term" value="P:regulation of dopamine uptake involved in synaptic transmission"/>
    <property type="evidence" value="ECO:0000315"/>
    <property type="project" value="MGI"/>
</dbReference>
<dbReference type="GO" id="GO:0002027">
    <property type="term" value="P:regulation of heart rate"/>
    <property type="evidence" value="ECO:0000315"/>
    <property type="project" value="MGI"/>
</dbReference>
<dbReference type="GO" id="GO:0090325">
    <property type="term" value="P:regulation of locomotion involved in locomotory behavior"/>
    <property type="evidence" value="ECO:0007669"/>
    <property type="project" value="Ensembl"/>
</dbReference>
<dbReference type="GO" id="GO:0048169">
    <property type="term" value="P:regulation of long-term neuronal synaptic plasticity"/>
    <property type="evidence" value="ECO:0000315"/>
    <property type="project" value="MGI"/>
</dbReference>
<dbReference type="GO" id="GO:0051580">
    <property type="term" value="P:regulation of neurotransmitter uptake"/>
    <property type="evidence" value="ECO:0000314"/>
    <property type="project" value="SynGO"/>
</dbReference>
<dbReference type="GO" id="GO:0043266">
    <property type="term" value="P:regulation of potassium ion transport"/>
    <property type="evidence" value="ECO:0000315"/>
    <property type="project" value="MGI"/>
</dbReference>
<dbReference type="GO" id="GO:0002028">
    <property type="term" value="P:regulation of sodium ion transport"/>
    <property type="evidence" value="ECO:0000315"/>
    <property type="project" value="MGI"/>
</dbReference>
<dbReference type="GO" id="GO:0051823">
    <property type="term" value="P:regulation of synapse structural plasticity"/>
    <property type="evidence" value="ECO:0007669"/>
    <property type="project" value="Ensembl"/>
</dbReference>
<dbReference type="GO" id="GO:0032228">
    <property type="term" value="P:regulation of synaptic transmission, GABAergic"/>
    <property type="evidence" value="ECO:0000315"/>
    <property type="project" value="MGI"/>
</dbReference>
<dbReference type="GO" id="GO:0001975">
    <property type="term" value="P:response to amphetamine"/>
    <property type="evidence" value="ECO:0000315"/>
    <property type="project" value="MGI"/>
</dbReference>
<dbReference type="GO" id="GO:0048678">
    <property type="term" value="P:response to axon injury"/>
    <property type="evidence" value="ECO:0007669"/>
    <property type="project" value="Ensembl"/>
</dbReference>
<dbReference type="GO" id="GO:0042220">
    <property type="term" value="P:response to cocaine"/>
    <property type="evidence" value="ECO:0000314"/>
    <property type="project" value="MGI"/>
</dbReference>
<dbReference type="GO" id="GO:0032355">
    <property type="term" value="P:response to estradiol"/>
    <property type="evidence" value="ECO:0007669"/>
    <property type="project" value="Ensembl"/>
</dbReference>
<dbReference type="GO" id="GO:0034776">
    <property type="term" value="P:response to histamine"/>
    <property type="evidence" value="ECO:0007669"/>
    <property type="project" value="Ensembl"/>
</dbReference>
<dbReference type="GO" id="GO:0001666">
    <property type="term" value="P:response to hypoxia"/>
    <property type="evidence" value="ECO:0007669"/>
    <property type="project" value="Ensembl"/>
</dbReference>
<dbReference type="GO" id="GO:0014854">
    <property type="term" value="P:response to inactivity"/>
    <property type="evidence" value="ECO:0007669"/>
    <property type="project" value="Ensembl"/>
</dbReference>
<dbReference type="GO" id="GO:0010039">
    <property type="term" value="P:response to iron ion"/>
    <property type="evidence" value="ECO:0007669"/>
    <property type="project" value="Ensembl"/>
</dbReference>
<dbReference type="GO" id="GO:0009416">
    <property type="term" value="P:response to light stimulus"/>
    <property type="evidence" value="ECO:0000315"/>
    <property type="project" value="MGI"/>
</dbReference>
<dbReference type="GO" id="GO:0043278">
    <property type="term" value="P:response to morphine"/>
    <property type="evidence" value="ECO:0000315"/>
    <property type="project" value="MGI"/>
</dbReference>
<dbReference type="GO" id="GO:0035094">
    <property type="term" value="P:response to nicotine"/>
    <property type="evidence" value="ECO:0007669"/>
    <property type="project" value="Ensembl"/>
</dbReference>
<dbReference type="GO" id="GO:0009636">
    <property type="term" value="P:response to toxic substance"/>
    <property type="evidence" value="ECO:0007669"/>
    <property type="project" value="Ensembl"/>
</dbReference>
<dbReference type="GO" id="GO:0009410">
    <property type="term" value="P:response to xenobiotic stimulus"/>
    <property type="evidence" value="ECO:0000314"/>
    <property type="project" value="MGI"/>
</dbReference>
<dbReference type="GO" id="GO:0007608">
    <property type="term" value="P:sensory perception of smell"/>
    <property type="evidence" value="ECO:0000315"/>
    <property type="project" value="MGI"/>
</dbReference>
<dbReference type="GO" id="GO:0001964">
    <property type="term" value="P:startle response"/>
    <property type="evidence" value="ECO:0000315"/>
    <property type="project" value="MGI"/>
</dbReference>
<dbReference type="GO" id="GO:0021756">
    <property type="term" value="P:striatum development"/>
    <property type="evidence" value="ECO:0007669"/>
    <property type="project" value="Ensembl"/>
</dbReference>
<dbReference type="GO" id="GO:0007416">
    <property type="term" value="P:synapse assembly"/>
    <property type="evidence" value="ECO:0007669"/>
    <property type="project" value="Ensembl"/>
</dbReference>
<dbReference type="GO" id="GO:0001659">
    <property type="term" value="P:temperature homeostasis"/>
    <property type="evidence" value="ECO:0000315"/>
    <property type="project" value="MGI"/>
</dbReference>
<dbReference type="GO" id="GO:0008542">
    <property type="term" value="P:visual learning"/>
    <property type="evidence" value="ECO:0000315"/>
    <property type="project" value="MGI"/>
</dbReference>
<dbReference type="GO" id="GO:0016055">
    <property type="term" value="P:Wnt signaling pathway"/>
    <property type="evidence" value="ECO:0007669"/>
    <property type="project" value="Ensembl"/>
</dbReference>
<dbReference type="CDD" id="cd15309">
    <property type="entry name" value="7tmA_D2_dopamine_R"/>
    <property type="match status" value="1"/>
</dbReference>
<dbReference type="FunFam" id="1.20.1070.10:FF:000099">
    <property type="entry name" value="D(2) dopamine receptor"/>
    <property type="match status" value="1"/>
</dbReference>
<dbReference type="FunFam" id="1.20.1070.10:FF:000086">
    <property type="entry name" value="Dopamine D2 receptor 2"/>
    <property type="match status" value="1"/>
</dbReference>
<dbReference type="Gene3D" id="1.20.1070.10">
    <property type="entry name" value="Rhodopsin 7-helix transmembrane proteins"/>
    <property type="match status" value="2"/>
</dbReference>
<dbReference type="InterPro" id="IPR001922">
    <property type="entry name" value="Dopamine_D2_rcpt"/>
</dbReference>
<dbReference type="InterPro" id="IPR000929">
    <property type="entry name" value="Dopamine_rcpt"/>
</dbReference>
<dbReference type="InterPro" id="IPR000276">
    <property type="entry name" value="GPCR_Rhodpsn"/>
</dbReference>
<dbReference type="InterPro" id="IPR017452">
    <property type="entry name" value="GPCR_Rhodpsn_7TM"/>
</dbReference>
<dbReference type="PANTHER" id="PTHR24248">
    <property type="entry name" value="ADRENERGIC RECEPTOR-RELATED G-PROTEIN COUPLED RECEPTOR"/>
    <property type="match status" value="1"/>
</dbReference>
<dbReference type="PANTHER" id="PTHR24248:SF87">
    <property type="entry name" value="D(2) DOPAMINE RECEPTOR"/>
    <property type="match status" value="1"/>
</dbReference>
<dbReference type="Pfam" id="PF00001">
    <property type="entry name" value="7tm_1"/>
    <property type="match status" value="1"/>
</dbReference>
<dbReference type="PRINTS" id="PR00567">
    <property type="entry name" value="DOPAMINED2R"/>
</dbReference>
<dbReference type="PRINTS" id="PR00242">
    <property type="entry name" value="DOPAMINER"/>
</dbReference>
<dbReference type="PRINTS" id="PR00237">
    <property type="entry name" value="GPCRRHODOPSN"/>
</dbReference>
<dbReference type="SMART" id="SM01381">
    <property type="entry name" value="7TM_GPCR_Srsx"/>
    <property type="match status" value="1"/>
</dbReference>
<dbReference type="SUPFAM" id="SSF81321">
    <property type="entry name" value="Family A G protein-coupled receptor-like"/>
    <property type="match status" value="1"/>
</dbReference>
<dbReference type="PROSITE" id="PS00237">
    <property type="entry name" value="G_PROTEIN_RECEP_F1_1"/>
    <property type="match status" value="1"/>
</dbReference>
<dbReference type="PROSITE" id="PS50262">
    <property type="entry name" value="G_PROTEIN_RECEP_F1_2"/>
    <property type="match status" value="1"/>
</dbReference>
<evidence type="ECO:0000250" key="1"/>
<evidence type="ECO:0000250" key="2">
    <source>
        <dbReference type="UniProtKB" id="P14416"/>
    </source>
</evidence>
<evidence type="ECO:0000250" key="3">
    <source>
        <dbReference type="UniProtKB" id="P61169"/>
    </source>
</evidence>
<evidence type="ECO:0000255" key="4"/>
<evidence type="ECO:0000255" key="5">
    <source>
        <dbReference type="PROSITE-ProRule" id="PRU00521"/>
    </source>
</evidence>
<evidence type="ECO:0000256" key="6">
    <source>
        <dbReference type="SAM" id="MobiDB-lite"/>
    </source>
</evidence>
<evidence type="ECO:0000269" key="7">
    <source>
    </source>
</evidence>
<evidence type="ECO:0000269" key="8">
    <source>
    </source>
</evidence>
<evidence type="ECO:0000269" key="9">
    <source>
    </source>
</evidence>
<evidence type="ECO:0000269" key="10">
    <source>
    </source>
</evidence>
<evidence type="ECO:0000303" key="11">
    <source>
    </source>
</evidence>
<evidence type="ECO:0000305" key="12"/>
<name>DRD2_MOUSE</name>
<reference key="1">
    <citation type="journal article" date="1991" name="FEBS Lett.">
        <title>Differential expression of the mouse D2 dopamine receptor isoforms.</title>
        <authorList>
            <person name="Montmayeur J.P."/>
            <person name="Bausero P."/>
            <person name="Amlaiky N."/>
            <person name="Maroteaux L."/>
            <person name="Hen R."/>
            <person name="Borrelli E."/>
        </authorList>
    </citation>
    <scope>NUCLEOTIDE SEQUENCE [MRNA] (ISOFORMS 1 AND 2)</scope>
    <scope>TISSUE SPECIFICITY</scope>
</reference>
<reference key="2">
    <citation type="submission" date="2005-07" db="EMBL/GenBank/DDBJ databases">
        <authorList>
            <person name="Mural R.J."/>
            <person name="Adams M.D."/>
            <person name="Myers E.W."/>
            <person name="Smith H.O."/>
            <person name="Venter J.C."/>
        </authorList>
    </citation>
    <scope>NUCLEOTIDE SEQUENCE [LARGE SCALE GENOMIC DNA]</scope>
</reference>
<reference key="3">
    <citation type="journal article" date="2004" name="Genome Res.">
        <title>The status, quality, and expansion of the NIH full-length cDNA project: the Mammalian Gene Collection (MGC).</title>
        <authorList>
            <consortium name="The MGC Project Team"/>
        </authorList>
    </citation>
    <scope>NUCLEOTIDE SEQUENCE [LARGE SCALE MRNA] (ISOFORM 1)</scope>
</reference>
<reference key="4">
    <citation type="journal article" date="2011" name="J. Biol. Chem.">
        <title>Contribution of Kv1.2 voltage-gated potassium channel to D2 autoreceptor regulation of axonal dopamine overflow.</title>
        <authorList>
            <person name="Fulton S."/>
            <person name="Thibault D."/>
            <person name="Mendez J.A."/>
            <person name="Lahaie N."/>
            <person name="Tirotta E."/>
            <person name="Borrelli E."/>
            <person name="Bouvier M."/>
            <person name="Tempel B.L."/>
            <person name="Trudeau L.E."/>
        </authorList>
    </citation>
    <scope>INTERACTION WITH KCNA2</scope>
</reference>
<reference key="5">
    <citation type="journal article" date="2015" name="J. Neurochem.">
        <title>Drebrin depletion alters neurotransmitter receptor levels in protein complexes, dendritic spine morphogenesis and memory-related synaptic plasticity in the mouse hippocampus.</title>
        <authorList>
            <person name="Jung G."/>
            <person name="Kim E.J."/>
            <person name="Cicvaric A."/>
            <person name="Sase S."/>
            <person name="Groeger M."/>
            <person name="Hoeger H."/>
            <person name="Sialana F.J."/>
            <person name="Berger J."/>
            <person name="Monje F.J."/>
            <person name="Lubec G."/>
        </authorList>
    </citation>
    <scope>INTERACTION WITH DRD1</scope>
</reference>
<reference key="6">
    <citation type="journal article" date="2019" name="Nat. Cell Biol.">
        <title>An opsin 5-dopamine pathway mediates light-dependent vascular development in the eye.</title>
        <authorList>
            <person name="Nguyen M.T."/>
            <person name="Vemaraju S."/>
            <person name="Nayak G."/>
            <person name="Odaka Y."/>
            <person name="Buhr E.D."/>
            <person name="Alonzo N."/>
            <person name="Tran U."/>
            <person name="Batie M."/>
            <person name="Upton B.A."/>
            <person name="Darvas M."/>
            <person name="Kozmik Z."/>
            <person name="Rao S."/>
            <person name="Hegde R.S."/>
            <person name="Iuvone P.M."/>
            <person name="Van Gelder R.N."/>
            <person name="Lang R.A."/>
        </authorList>
    </citation>
    <scope>FUNCTION</scope>
    <scope>TISSUE SPECIFICITY</scope>
    <scope>DISRUPTION PHENOTYPE</scope>
</reference>
<gene>
    <name type="primary">Drd2</name>
</gene>
<feature type="chain" id="PRO_0000069388" description="D(2) dopamine receptor">
    <location>
        <begin position="1"/>
        <end position="444"/>
    </location>
</feature>
<feature type="topological domain" description="Extracellular" evidence="1">
    <location>
        <begin position="1"/>
        <end position="37"/>
    </location>
</feature>
<feature type="transmembrane region" description="Helical; Name=1" evidence="1">
    <location>
        <begin position="38"/>
        <end position="60"/>
    </location>
</feature>
<feature type="topological domain" description="Cytoplasmic" evidence="1">
    <location>
        <begin position="61"/>
        <end position="70"/>
    </location>
</feature>
<feature type="transmembrane region" description="Helical; Name=2" evidence="1">
    <location>
        <begin position="71"/>
        <end position="93"/>
    </location>
</feature>
<feature type="topological domain" description="Extracellular" evidence="1">
    <location>
        <begin position="94"/>
        <end position="108"/>
    </location>
</feature>
<feature type="transmembrane region" description="Helical; Name=3" evidence="1">
    <location>
        <begin position="109"/>
        <end position="130"/>
    </location>
</feature>
<feature type="topological domain" description="Cytoplasmic" evidence="1">
    <location>
        <begin position="131"/>
        <end position="151"/>
    </location>
</feature>
<feature type="transmembrane region" description="Helical; Name=4" evidence="1">
    <location>
        <begin position="152"/>
        <end position="172"/>
    </location>
</feature>
<feature type="topological domain" description="Extracellular" evidence="1">
    <location>
        <begin position="173"/>
        <end position="188"/>
    </location>
</feature>
<feature type="transmembrane region" description="Helical; Name=5" evidence="1">
    <location>
        <begin position="189"/>
        <end position="213"/>
    </location>
</feature>
<feature type="topological domain" description="Cytoplasmic" evidence="1">
    <location>
        <begin position="214"/>
        <end position="374"/>
    </location>
</feature>
<feature type="transmembrane region" description="Helical; Name=6" evidence="1">
    <location>
        <begin position="375"/>
        <end position="396"/>
    </location>
</feature>
<feature type="topological domain" description="Extracellular" evidence="1">
    <location>
        <begin position="397"/>
        <end position="410"/>
    </location>
</feature>
<feature type="transmembrane region" description="Helical; Name=7" evidence="1">
    <location>
        <begin position="411"/>
        <end position="432"/>
    </location>
</feature>
<feature type="topological domain" description="Cytoplasmic" evidence="1">
    <location>
        <begin position="433"/>
        <end position="444"/>
    </location>
</feature>
<feature type="region of interest" description="Interaction with PPP1R9B" evidence="1">
    <location>
        <begin position="211"/>
        <end position="374"/>
    </location>
</feature>
<feature type="region of interest" description="Disordered" evidence="6">
    <location>
        <begin position="282"/>
        <end position="329"/>
    </location>
</feature>
<feature type="site" description="Important for receptor activation">
    <location>
        <position position="194"/>
    </location>
</feature>
<feature type="site" description="Important for receptor activation">
    <location>
        <position position="197"/>
    </location>
</feature>
<feature type="lipid moiety-binding region" description="S-palmitoyl cysteine" evidence="2">
    <location>
        <position position="444"/>
    </location>
</feature>
<feature type="glycosylation site" description="N-linked (GlcNAc...) asparagine" evidence="4">
    <location>
        <position position="5"/>
    </location>
</feature>
<feature type="glycosylation site" description="N-linked (GlcNAc...) asparagine" evidence="4">
    <location>
        <position position="17"/>
    </location>
</feature>
<feature type="glycosylation site" description="N-linked (GlcNAc...) asparagine" evidence="4">
    <location>
        <position position="23"/>
    </location>
</feature>
<feature type="disulfide bond" evidence="5">
    <location>
        <begin position="107"/>
        <end position="182"/>
    </location>
</feature>
<feature type="disulfide bond" evidence="5">
    <location>
        <begin position="400"/>
        <end position="402"/>
    </location>
</feature>
<feature type="splice variant" id="VSP_010241" description="In isoform 2." evidence="11">
    <location>
        <begin position="242"/>
        <end position="270"/>
    </location>
</feature>
<feature type="sequence conflict" description="In Ref. 1; CAA39209." evidence="12" ref="1">
    <original>P</original>
    <variation>A</variation>
    <location>
        <position position="29"/>
    </location>
</feature>
<protein>
    <recommendedName>
        <fullName>D(2) dopamine receptor</fullName>
    </recommendedName>
    <alternativeName>
        <fullName>Dopamine D2 receptor</fullName>
    </alternativeName>
</protein>
<keyword id="KW-0025">Alternative splicing</keyword>
<keyword id="KW-1003">Cell membrane</keyword>
<keyword id="KW-1015">Disulfide bond</keyword>
<keyword id="KW-0297">G-protein coupled receptor</keyword>
<keyword id="KW-0325">Glycoprotein</keyword>
<keyword id="KW-0333">Golgi apparatus</keyword>
<keyword id="KW-0449">Lipoprotein</keyword>
<keyword id="KW-0472">Membrane</keyword>
<keyword id="KW-0564">Palmitate</keyword>
<keyword id="KW-0675">Receptor</keyword>
<keyword id="KW-1185">Reference proteome</keyword>
<keyword id="KW-0807">Transducer</keyword>
<keyword id="KW-0812">Transmembrane</keyword>
<keyword id="KW-1133">Transmembrane helix</keyword>